<sequence>MEEPRCLQANCFFRGKEHSIQLSVSQAVLEVEVEERRSTKRWRGHFDAASVEDLTRKTGNFKQFGIFCSMLEAALMKSSEAVSLELLTYGDLEALRCCKVGVATRVPPSTSPLSSKRYLILVYCVEFDRIHYPLPLPYIGEADMAALRRLVQEQQDELAQLRDELRRAQQEVWRLEDERLRDKAWHQQEQRRMTKELTEVKAAEKMLRAHVKTLTAELAVCRKGRSTSATAPGCPQDRRRSNSRDSRSSSQGRLPPRSPSPAGSRPPRFNPTAFVRSREQRRQEAELRRQKLPRGTVSSGDNCRRRGRRSSSAESLQSRRSAQSSGSEADTCPQRRRGLGGPSTRSPLSASSCNSTSVASHPNRGCKQHGKENLGTEPSATLSEIDARLQALQAYISTLGTHM</sequence>
<comment type="function">
    <text evidence="1">Microtubule-binding centrosomal protein required for centriole cohesion, independently of the centrosome-associated protein/CEP250 and rootletin/CROCC linker. In interphase, required for anchoring microtubule at the mother centriole subdistal appendages and for centrosome positioning. During mitosis, may be involved in spindle assembly and chromatin alignment by regulating the organization of spindle microtubules into a symmetrical structure. Plays a non-essential role in ciliogenesis.</text>
</comment>
<comment type="subunit">
    <text evidence="1">Forms homodimers (via head domain).</text>
</comment>
<comment type="subcellular location">
    <subcellularLocation>
        <location evidence="1">Cytoplasm</location>
        <location evidence="1">Cytoskeleton</location>
        <location evidence="1">Microtubule organizing center</location>
        <location evidence="1">Centrosome</location>
    </subcellularLocation>
    <subcellularLocation>
        <location evidence="1">Cytoplasm</location>
        <location evidence="1">Cytoskeleton</location>
        <location evidence="1">Microtubule organizing center</location>
        <location evidence="1">Centrosome</location>
        <location evidence="1">Centriolar satellite</location>
    </subcellularLocation>
    <subcellularLocation>
        <location evidence="1">Cytoplasm</location>
        <location evidence="1">Cytoskeleton</location>
        <location evidence="1">Cilium basal body</location>
    </subcellularLocation>
    <text evidence="1">Localization at the centriolar satellite is dependent on intact microtubule network. Localizes at the centriole subdistal appendages and proximal ends. Localized to centrosomal/satellite-like structures with the onset of centrosome separation in early G2.</text>
</comment>
<comment type="domain">
    <text evidence="1">The coiled-coil domain is involved in microtubule-binding.</text>
</comment>
<comment type="miscellaneous">
    <text evidence="1">The N-terminal 3D structure (head domain) resembles that of NHEJ1/XLF, PAXX, SASS6 and XRCC4.</text>
</comment>
<comment type="similarity">
    <text evidence="4">Belongs to the CCDC61 family.</text>
</comment>
<dbReference type="EMBL" id="AJ720627">
    <property type="protein sequence ID" value="CAG32286.1"/>
    <property type="molecule type" value="mRNA"/>
</dbReference>
<dbReference type="RefSeq" id="NP_001006546.1">
    <property type="nucleotide sequence ID" value="NM_001006546.4"/>
</dbReference>
<dbReference type="RefSeq" id="XP_015132433.1">
    <property type="nucleotide sequence ID" value="XM_015276947.1"/>
</dbReference>
<dbReference type="SMR" id="Q5ZJ07"/>
<dbReference type="FunCoup" id="Q5ZJ07">
    <property type="interactions" value="945"/>
</dbReference>
<dbReference type="STRING" id="9031.ENSGALP00000010847"/>
<dbReference type="PaxDb" id="9031-ENSGALP00000010847"/>
<dbReference type="GeneID" id="424880"/>
<dbReference type="KEGG" id="gga:424880"/>
<dbReference type="CTD" id="729440"/>
<dbReference type="VEuPathDB" id="HostDB:geneid_424880"/>
<dbReference type="eggNOG" id="ENOG502QRAS">
    <property type="taxonomic scope" value="Eukaryota"/>
</dbReference>
<dbReference type="HOGENOM" id="CLU_038746_1_0_1"/>
<dbReference type="InParanoid" id="Q5ZJ07"/>
<dbReference type="OMA" id="PMKEYSS"/>
<dbReference type="OrthoDB" id="568137at2759"/>
<dbReference type="PhylomeDB" id="Q5ZJ07"/>
<dbReference type="TreeFam" id="TF329415"/>
<dbReference type="PRO" id="PR:Q5ZJ07"/>
<dbReference type="Proteomes" id="UP000000539">
    <property type="component" value="Unassembled WGS sequence"/>
</dbReference>
<dbReference type="GO" id="GO:0034451">
    <property type="term" value="C:centriolar satellite"/>
    <property type="evidence" value="ECO:0000250"/>
    <property type="project" value="UniProtKB"/>
</dbReference>
<dbReference type="GO" id="GO:0120103">
    <property type="term" value="C:centriolar subdistal appendage"/>
    <property type="evidence" value="ECO:0000250"/>
    <property type="project" value="UniProtKB"/>
</dbReference>
<dbReference type="GO" id="GO:0005813">
    <property type="term" value="C:centrosome"/>
    <property type="evidence" value="ECO:0000250"/>
    <property type="project" value="UniProtKB"/>
</dbReference>
<dbReference type="GO" id="GO:0036064">
    <property type="term" value="C:ciliary basal body"/>
    <property type="evidence" value="ECO:0000250"/>
    <property type="project" value="UniProtKB"/>
</dbReference>
<dbReference type="GO" id="GO:0005737">
    <property type="term" value="C:cytoplasm"/>
    <property type="evidence" value="ECO:0007669"/>
    <property type="project" value="UniProtKB-KW"/>
</dbReference>
<dbReference type="GO" id="GO:0005815">
    <property type="term" value="C:microtubule organizing center"/>
    <property type="evidence" value="ECO:0000250"/>
    <property type="project" value="UniProtKB"/>
</dbReference>
<dbReference type="GO" id="GO:0042802">
    <property type="term" value="F:identical protein binding"/>
    <property type="evidence" value="ECO:0000250"/>
    <property type="project" value="UniProtKB"/>
</dbReference>
<dbReference type="GO" id="GO:0030030">
    <property type="term" value="P:cell projection organization"/>
    <property type="evidence" value="ECO:0007669"/>
    <property type="project" value="UniProtKB-KW"/>
</dbReference>
<dbReference type="GO" id="GO:0098534">
    <property type="term" value="P:centriole assembly"/>
    <property type="evidence" value="ECO:0000250"/>
    <property type="project" value="UniProtKB"/>
</dbReference>
<dbReference type="GO" id="GO:0090307">
    <property type="term" value="P:mitotic spindle assembly"/>
    <property type="evidence" value="ECO:0000250"/>
    <property type="project" value="UniProtKB"/>
</dbReference>
<dbReference type="CDD" id="cd22284">
    <property type="entry name" value="HD_CCDC61_N"/>
    <property type="match status" value="1"/>
</dbReference>
<dbReference type="InterPro" id="IPR049733">
    <property type="entry name" value="CCDC61_N"/>
</dbReference>
<dbReference type="PANTHER" id="PTHR22691:SF1">
    <property type="entry name" value="CENTROSOMAL PROTEIN CCDC61"/>
    <property type="match status" value="1"/>
</dbReference>
<dbReference type="PANTHER" id="PTHR22691">
    <property type="entry name" value="YEAST SPT2-RELATED"/>
    <property type="match status" value="1"/>
</dbReference>
<proteinExistence type="evidence at transcript level"/>
<keyword id="KW-0966">Cell projection</keyword>
<keyword id="KW-0970">Cilium biogenesis/degradation</keyword>
<keyword id="KW-0175">Coiled coil</keyword>
<keyword id="KW-0963">Cytoplasm</keyword>
<keyword id="KW-0206">Cytoskeleton</keyword>
<keyword id="KW-1185">Reference proteome</keyword>
<gene>
    <name type="primary">CCDC61</name>
    <name evidence="1" type="synonym">VFL3</name>
    <name type="ORF">RCJMB04_22a5</name>
</gene>
<organism>
    <name type="scientific">Gallus gallus</name>
    <name type="common">Chicken</name>
    <dbReference type="NCBI Taxonomy" id="9031"/>
    <lineage>
        <taxon>Eukaryota</taxon>
        <taxon>Metazoa</taxon>
        <taxon>Chordata</taxon>
        <taxon>Craniata</taxon>
        <taxon>Vertebrata</taxon>
        <taxon>Euteleostomi</taxon>
        <taxon>Archelosauria</taxon>
        <taxon>Archosauria</taxon>
        <taxon>Dinosauria</taxon>
        <taxon>Saurischia</taxon>
        <taxon>Theropoda</taxon>
        <taxon>Coelurosauria</taxon>
        <taxon>Aves</taxon>
        <taxon>Neognathae</taxon>
        <taxon>Galloanserae</taxon>
        <taxon>Galliformes</taxon>
        <taxon>Phasianidae</taxon>
        <taxon>Phasianinae</taxon>
        <taxon>Gallus</taxon>
    </lineage>
</organism>
<name>CCD61_CHICK</name>
<feature type="chain" id="PRO_0000311258" description="Centrosomal protein CCDC61">
    <location>
        <begin position="1"/>
        <end position="403"/>
    </location>
</feature>
<feature type="region of interest" description="Head domain" evidence="1">
    <location>
        <begin position="1"/>
        <end position="142"/>
    </location>
</feature>
<feature type="region of interest" description="Disordered" evidence="3">
    <location>
        <begin position="224"/>
        <end position="377"/>
    </location>
</feature>
<feature type="coiled-coil region" evidence="2">
    <location>
        <begin position="144"/>
        <end position="178"/>
    </location>
</feature>
<feature type="compositionally biased region" description="Basic and acidic residues" evidence="3">
    <location>
        <begin position="236"/>
        <end position="247"/>
    </location>
</feature>
<feature type="compositionally biased region" description="Basic and acidic residues" evidence="3">
    <location>
        <begin position="276"/>
        <end position="289"/>
    </location>
</feature>
<feature type="compositionally biased region" description="Low complexity" evidence="3">
    <location>
        <begin position="310"/>
        <end position="328"/>
    </location>
</feature>
<feature type="compositionally biased region" description="Low complexity" evidence="3">
    <location>
        <begin position="349"/>
        <end position="360"/>
    </location>
</feature>
<reference key="1">
    <citation type="journal article" date="2005" name="Genome Biol.">
        <title>Full-length cDNAs from chicken bursal lymphocytes to facilitate gene function analysis.</title>
        <authorList>
            <person name="Caldwell R.B."/>
            <person name="Kierzek A.M."/>
            <person name="Arakawa H."/>
            <person name="Bezzubov Y."/>
            <person name="Zaim J."/>
            <person name="Fiedler P."/>
            <person name="Kutter S."/>
            <person name="Blagodatski A."/>
            <person name="Kostovska D."/>
            <person name="Koter M."/>
            <person name="Plachy J."/>
            <person name="Carninci P."/>
            <person name="Hayashizaki Y."/>
            <person name="Buerstedde J.-M."/>
        </authorList>
    </citation>
    <scope>NUCLEOTIDE SEQUENCE [LARGE SCALE MRNA]</scope>
    <source>
        <strain>CB</strain>
        <tissue>Bursa of Fabricius</tissue>
    </source>
</reference>
<protein>
    <recommendedName>
        <fullName evidence="1">Centrosomal protein CCDC61</fullName>
    </recommendedName>
    <alternativeName>
        <fullName evidence="1">Coiled-coil domain-containing protein 61</fullName>
    </alternativeName>
    <alternativeName>
        <fullName evidence="1">VFL3 homolog</fullName>
    </alternativeName>
</protein>
<accession>Q5ZJ07</accession>
<evidence type="ECO:0000250" key="1">
    <source>
        <dbReference type="UniProtKB" id="Q9Y6R9"/>
    </source>
</evidence>
<evidence type="ECO:0000255" key="2"/>
<evidence type="ECO:0000256" key="3">
    <source>
        <dbReference type="SAM" id="MobiDB-lite"/>
    </source>
</evidence>
<evidence type="ECO:0000305" key="4"/>